<dbReference type="EC" id="6.1.1.2" evidence="1"/>
<dbReference type="EMBL" id="AE009949">
    <property type="protein sequence ID" value="AAL98674.1"/>
    <property type="molecule type" value="Genomic_DNA"/>
</dbReference>
<dbReference type="RefSeq" id="WP_002991455.1">
    <property type="nucleotide sequence ID" value="NC_003485.1"/>
</dbReference>
<dbReference type="SMR" id="P67598"/>
<dbReference type="GeneID" id="69901625"/>
<dbReference type="KEGG" id="spm:spyM18_2245"/>
<dbReference type="HOGENOM" id="CLU_029244_0_1_9"/>
<dbReference type="GO" id="GO:0005829">
    <property type="term" value="C:cytosol"/>
    <property type="evidence" value="ECO:0007669"/>
    <property type="project" value="TreeGrafter"/>
</dbReference>
<dbReference type="GO" id="GO:0005524">
    <property type="term" value="F:ATP binding"/>
    <property type="evidence" value="ECO:0007669"/>
    <property type="project" value="UniProtKB-UniRule"/>
</dbReference>
<dbReference type="GO" id="GO:0004830">
    <property type="term" value="F:tryptophan-tRNA ligase activity"/>
    <property type="evidence" value="ECO:0007669"/>
    <property type="project" value="UniProtKB-UniRule"/>
</dbReference>
<dbReference type="GO" id="GO:0006436">
    <property type="term" value="P:tryptophanyl-tRNA aminoacylation"/>
    <property type="evidence" value="ECO:0007669"/>
    <property type="project" value="UniProtKB-UniRule"/>
</dbReference>
<dbReference type="CDD" id="cd00806">
    <property type="entry name" value="TrpRS_core"/>
    <property type="match status" value="1"/>
</dbReference>
<dbReference type="FunFam" id="1.10.240.10:FF:000005">
    <property type="entry name" value="Tryptophan--tRNA ligase"/>
    <property type="match status" value="1"/>
</dbReference>
<dbReference type="FunFam" id="3.40.50.620:FF:000094">
    <property type="entry name" value="Tryptophan--tRNA ligase"/>
    <property type="match status" value="1"/>
</dbReference>
<dbReference type="Gene3D" id="3.40.50.620">
    <property type="entry name" value="HUPs"/>
    <property type="match status" value="1"/>
</dbReference>
<dbReference type="Gene3D" id="1.10.240.10">
    <property type="entry name" value="Tyrosyl-Transfer RNA Synthetase"/>
    <property type="match status" value="1"/>
</dbReference>
<dbReference type="HAMAP" id="MF_00140_B">
    <property type="entry name" value="Trp_tRNA_synth_B"/>
    <property type="match status" value="1"/>
</dbReference>
<dbReference type="InterPro" id="IPR001412">
    <property type="entry name" value="aa-tRNA-synth_I_CS"/>
</dbReference>
<dbReference type="InterPro" id="IPR002305">
    <property type="entry name" value="aa-tRNA-synth_Ic"/>
</dbReference>
<dbReference type="InterPro" id="IPR014729">
    <property type="entry name" value="Rossmann-like_a/b/a_fold"/>
</dbReference>
<dbReference type="InterPro" id="IPR002306">
    <property type="entry name" value="Trp-tRNA-ligase"/>
</dbReference>
<dbReference type="InterPro" id="IPR024109">
    <property type="entry name" value="Trp-tRNA-ligase_bac-type"/>
</dbReference>
<dbReference type="InterPro" id="IPR050203">
    <property type="entry name" value="Trp-tRNA_synthetase"/>
</dbReference>
<dbReference type="NCBIfam" id="TIGR00233">
    <property type="entry name" value="trpS"/>
    <property type="match status" value="1"/>
</dbReference>
<dbReference type="PANTHER" id="PTHR43766">
    <property type="entry name" value="TRYPTOPHAN--TRNA LIGASE, MITOCHONDRIAL"/>
    <property type="match status" value="1"/>
</dbReference>
<dbReference type="PANTHER" id="PTHR43766:SF1">
    <property type="entry name" value="TRYPTOPHAN--TRNA LIGASE, MITOCHONDRIAL"/>
    <property type="match status" value="1"/>
</dbReference>
<dbReference type="Pfam" id="PF00579">
    <property type="entry name" value="tRNA-synt_1b"/>
    <property type="match status" value="1"/>
</dbReference>
<dbReference type="PRINTS" id="PR01039">
    <property type="entry name" value="TRNASYNTHTRP"/>
</dbReference>
<dbReference type="SUPFAM" id="SSF52374">
    <property type="entry name" value="Nucleotidylyl transferase"/>
    <property type="match status" value="1"/>
</dbReference>
<dbReference type="PROSITE" id="PS00178">
    <property type="entry name" value="AA_TRNA_LIGASE_I"/>
    <property type="match status" value="1"/>
</dbReference>
<gene>
    <name evidence="1" type="primary">trpS</name>
    <name type="ordered locus">spyM18_2245</name>
</gene>
<keyword id="KW-0030">Aminoacyl-tRNA synthetase</keyword>
<keyword id="KW-0067">ATP-binding</keyword>
<keyword id="KW-0963">Cytoplasm</keyword>
<keyword id="KW-0436">Ligase</keyword>
<keyword id="KW-0547">Nucleotide-binding</keyword>
<keyword id="KW-0648">Protein biosynthesis</keyword>
<comment type="function">
    <text evidence="1">Catalyzes the attachment of tryptophan to tRNA(Trp).</text>
</comment>
<comment type="catalytic activity">
    <reaction evidence="1">
        <text>tRNA(Trp) + L-tryptophan + ATP = L-tryptophyl-tRNA(Trp) + AMP + diphosphate + H(+)</text>
        <dbReference type="Rhea" id="RHEA:24080"/>
        <dbReference type="Rhea" id="RHEA-COMP:9671"/>
        <dbReference type="Rhea" id="RHEA-COMP:9705"/>
        <dbReference type="ChEBI" id="CHEBI:15378"/>
        <dbReference type="ChEBI" id="CHEBI:30616"/>
        <dbReference type="ChEBI" id="CHEBI:33019"/>
        <dbReference type="ChEBI" id="CHEBI:57912"/>
        <dbReference type="ChEBI" id="CHEBI:78442"/>
        <dbReference type="ChEBI" id="CHEBI:78535"/>
        <dbReference type="ChEBI" id="CHEBI:456215"/>
        <dbReference type="EC" id="6.1.1.2"/>
    </reaction>
</comment>
<comment type="subunit">
    <text evidence="1">Homodimer.</text>
</comment>
<comment type="subcellular location">
    <subcellularLocation>
        <location evidence="1">Cytoplasm</location>
    </subcellularLocation>
</comment>
<comment type="similarity">
    <text evidence="1">Belongs to the class-I aminoacyl-tRNA synthetase family.</text>
</comment>
<name>SYW_STRP8</name>
<organism>
    <name type="scientific">Streptococcus pyogenes serotype M18 (strain MGAS8232)</name>
    <dbReference type="NCBI Taxonomy" id="186103"/>
    <lineage>
        <taxon>Bacteria</taxon>
        <taxon>Bacillati</taxon>
        <taxon>Bacillota</taxon>
        <taxon>Bacilli</taxon>
        <taxon>Lactobacillales</taxon>
        <taxon>Streptococcaceae</taxon>
        <taxon>Streptococcus</taxon>
    </lineage>
</organism>
<protein>
    <recommendedName>
        <fullName evidence="1">Tryptophan--tRNA ligase</fullName>
        <ecNumber evidence="1">6.1.1.2</ecNumber>
    </recommendedName>
    <alternativeName>
        <fullName evidence="1">Tryptophanyl-tRNA synthetase</fullName>
        <shortName evidence="1">TrpRS</shortName>
    </alternativeName>
</protein>
<accession>P67598</accession>
<accession>Q8NYZ2</accession>
<reference key="1">
    <citation type="journal article" date="2002" name="Proc. Natl. Acad. Sci. U.S.A.">
        <title>Genome sequence and comparative microarray analysis of serotype M18 group A Streptococcus strains associated with acute rheumatic fever outbreaks.</title>
        <authorList>
            <person name="Smoot J.C."/>
            <person name="Barbian K.D."/>
            <person name="Van Gompel J.J."/>
            <person name="Smoot L.M."/>
            <person name="Chaussee M.S."/>
            <person name="Sylva G.L."/>
            <person name="Sturdevant D.E."/>
            <person name="Ricklefs S.M."/>
            <person name="Porcella S.F."/>
            <person name="Parkins L.D."/>
            <person name="Beres S.B."/>
            <person name="Campbell D.S."/>
            <person name="Smith T.M."/>
            <person name="Zhang Q."/>
            <person name="Kapur V."/>
            <person name="Daly J.A."/>
            <person name="Veasy L.G."/>
            <person name="Musser J.M."/>
        </authorList>
    </citation>
    <scope>NUCLEOTIDE SEQUENCE [LARGE SCALE GENOMIC DNA]</scope>
    <source>
        <strain>MGAS8232</strain>
    </source>
</reference>
<proteinExistence type="inferred from homology"/>
<sequence>MTKPIILTGDRPTGKLHLGHYVGSLKNRVFLQNENKYKMFVFLADQQALTDHAKESELIQESIGNVALDYLSVGLDPKQSTIFIQSQIPELAELSMYYMNLVSLARLERNPTVKTEIAQKGFGESIPSGFLVYPVSQAADITAFKANLVPVGNDQKPMIEQTREIVRSFNHTYHTDCLVEPEGIYPENEKAGRLPGLDGNAKMSKSLGNGIYLSDDADTVRKKVMSMYTDPNHIKIEDPGQIEGNMVFHYLDIFARKEDQADIEAMKEHYQRGGLGDVKTKRYLLDILERELAPIRERRLEYAKDMGEVFRMLQEGSQKARTVAAKTLSEVKSAMGINYF</sequence>
<feature type="chain" id="PRO_0000136695" description="Tryptophan--tRNA ligase">
    <location>
        <begin position="1"/>
        <end position="340"/>
    </location>
</feature>
<feature type="short sequence motif" description="'HIGH' region" evidence="1">
    <location>
        <begin position="12"/>
        <end position="20"/>
    </location>
</feature>
<feature type="short sequence motif" description="'KMSKS' region" evidence="1">
    <location>
        <begin position="202"/>
        <end position="206"/>
    </location>
</feature>
<feature type="binding site" evidence="1">
    <location>
        <begin position="11"/>
        <end position="13"/>
    </location>
    <ligand>
        <name>ATP</name>
        <dbReference type="ChEBI" id="CHEBI:30616"/>
    </ligand>
</feature>
<feature type="binding site" evidence="1">
    <location>
        <begin position="19"/>
        <end position="20"/>
    </location>
    <ligand>
        <name>ATP</name>
        <dbReference type="ChEBI" id="CHEBI:30616"/>
    </ligand>
</feature>
<feature type="binding site" evidence="1">
    <location>
        <position position="140"/>
    </location>
    <ligand>
        <name>L-tryptophan</name>
        <dbReference type="ChEBI" id="CHEBI:57912"/>
    </ligand>
</feature>
<feature type="binding site" evidence="1">
    <location>
        <begin position="152"/>
        <end position="154"/>
    </location>
    <ligand>
        <name>ATP</name>
        <dbReference type="ChEBI" id="CHEBI:30616"/>
    </ligand>
</feature>
<feature type="binding site" evidence="1">
    <location>
        <position position="194"/>
    </location>
    <ligand>
        <name>ATP</name>
        <dbReference type="ChEBI" id="CHEBI:30616"/>
    </ligand>
</feature>
<feature type="binding site" evidence="1">
    <location>
        <begin position="202"/>
        <end position="206"/>
    </location>
    <ligand>
        <name>ATP</name>
        <dbReference type="ChEBI" id="CHEBI:30616"/>
    </ligand>
</feature>
<evidence type="ECO:0000255" key="1">
    <source>
        <dbReference type="HAMAP-Rule" id="MF_00140"/>
    </source>
</evidence>